<accession>B5EKF7</accession>
<dbReference type="EC" id="6.3.5.-" evidence="1"/>
<dbReference type="EMBL" id="CP001132">
    <property type="protein sequence ID" value="ACH83992.1"/>
    <property type="molecule type" value="Genomic_DNA"/>
</dbReference>
<dbReference type="RefSeq" id="WP_012536980.1">
    <property type="nucleotide sequence ID" value="NC_011206.1"/>
</dbReference>
<dbReference type="SMR" id="B5EKF7"/>
<dbReference type="GeneID" id="65281238"/>
<dbReference type="KEGG" id="afe:Lferr_1771"/>
<dbReference type="eggNOG" id="COG0721">
    <property type="taxonomic scope" value="Bacteria"/>
</dbReference>
<dbReference type="HOGENOM" id="CLU_105899_2_2_6"/>
<dbReference type="GO" id="GO:0050566">
    <property type="term" value="F:asparaginyl-tRNA synthase (glutamine-hydrolyzing) activity"/>
    <property type="evidence" value="ECO:0007669"/>
    <property type="project" value="RHEA"/>
</dbReference>
<dbReference type="GO" id="GO:0005524">
    <property type="term" value="F:ATP binding"/>
    <property type="evidence" value="ECO:0007669"/>
    <property type="project" value="UniProtKB-KW"/>
</dbReference>
<dbReference type="GO" id="GO:0050567">
    <property type="term" value="F:glutaminyl-tRNA synthase (glutamine-hydrolyzing) activity"/>
    <property type="evidence" value="ECO:0007669"/>
    <property type="project" value="UniProtKB-UniRule"/>
</dbReference>
<dbReference type="GO" id="GO:0070681">
    <property type="term" value="P:glutaminyl-tRNAGln biosynthesis via transamidation"/>
    <property type="evidence" value="ECO:0007669"/>
    <property type="project" value="TreeGrafter"/>
</dbReference>
<dbReference type="GO" id="GO:0006450">
    <property type="term" value="P:regulation of translational fidelity"/>
    <property type="evidence" value="ECO:0007669"/>
    <property type="project" value="InterPro"/>
</dbReference>
<dbReference type="GO" id="GO:0006412">
    <property type="term" value="P:translation"/>
    <property type="evidence" value="ECO:0007669"/>
    <property type="project" value="UniProtKB-UniRule"/>
</dbReference>
<dbReference type="Gene3D" id="1.10.20.60">
    <property type="entry name" value="Glu-tRNAGln amidotransferase C subunit, N-terminal domain"/>
    <property type="match status" value="1"/>
</dbReference>
<dbReference type="HAMAP" id="MF_00122">
    <property type="entry name" value="GatC"/>
    <property type="match status" value="1"/>
</dbReference>
<dbReference type="InterPro" id="IPR036113">
    <property type="entry name" value="Asp/Glu-ADT_sf_sub_c"/>
</dbReference>
<dbReference type="InterPro" id="IPR003837">
    <property type="entry name" value="GatC"/>
</dbReference>
<dbReference type="NCBIfam" id="TIGR00135">
    <property type="entry name" value="gatC"/>
    <property type="match status" value="1"/>
</dbReference>
<dbReference type="PANTHER" id="PTHR15004">
    <property type="entry name" value="GLUTAMYL-TRNA(GLN) AMIDOTRANSFERASE SUBUNIT C, MITOCHONDRIAL"/>
    <property type="match status" value="1"/>
</dbReference>
<dbReference type="PANTHER" id="PTHR15004:SF0">
    <property type="entry name" value="GLUTAMYL-TRNA(GLN) AMIDOTRANSFERASE SUBUNIT C, MITOCHONDRIAL"/>
    <property type="match status" value="1"/>
</dbReference>
<dbReference type="Pfam" id="PF02686">
    <property type="entry name" value="GatC"/>
    <property type="match status" value="1"/>
</dbReference>
<dbReference type="SUPFAM" id="SSF141000">
    <property type="entry name" value="Glu-tRNAGln amidotransferase C subunit"/>
    <property type="match status" value="1"/>
</dbReference>
<evidence type="ECO:0000255" key="1">
    <source>
        <dbReference type="HAMAP-Rule" id="MF_00122"/>
    </source>
</evidence>
<organism>
    <name type="scientific">Acidithiobacillus ferrooxidans (strain ATCC 53993 / BNL-5-31)</name>
    <name type="common">Leptospirillum ferrooxidans (ATCC 53993)</name>
    <dbReference type="NCBI Taxonomy" id="380394"/>
    <lineage>
        <taxon>Bacteria</taxon>
        <taxon>Pseudomonadati</taxon>
        <taxon>Pseudomonadota</taxon>
        <taxon>Acidithiobacillia</taxon>
        <taxon>Acidithiobacillales</taxon>
        <taxon>Acidithiobacillaceae</taxon>
        <taxon>Acidithiobacillus</taxon>
    </lineage>
</organism>
<protein>
    <recommendedName>
        <fullName evidence="1">Aspartyl/glutamyl-tRNA(Asn/Gln) amidotransferase subunit C</fullName>
        <shortName evidence="1">Asp/Glu-ADT subunit C</shortName>
        <ecNumber evidence="1">6.3.5.-</ecNumber>
    </recommendedName>
</protein>
<keyword id="KW-0067">ATP-binding</keyword>
<keyword id="KW-0436">Ligase</keyword>
<keyword id="KW-0547">Nucleotide-binding</keyword>
<keyword id="KW-0648">Protein biosynthesis</keyword>
<gene>
    <name evidence="1" type="primary">gatC</name>
    <name type="ordered locus">Lferr_1771</name>
</gene>
<reference key="1">
    <citation type="submission" date="2008-08" db="EMBL/GenBank/DDBJ databases">
        <title>Complete sequence of Acidithiobacillus ferrooxidans ATCC 53993.</title>
        <authorList>
            <person name="Lucas S."/>
            <person name="Copeland A."/>
            <person name="Lapidus A."/>
            <person name="Glavina del Rio T."/>
            <person name="Dalin E."/>
            <person name="Tice H."/>
            <person name="Bruce D."/>
            <person name="Goodwin L."/>
            <person name="Pitluck S."/>
            <person name="Sims D."/>
            <person name="Brettin T."/>
            <person name="Detter J.C."/>
            <person name="Han C."/>
            <person name="Kuske C.R."/>
            <person name="Larimer F."/>
            <person name="Land M."/>
            <person name="Hauser L."/>
            <person name="Kyrpides N."/>
            <person name="Lykidis A."/>
            <person name="Borole A.P."/>
        </authorList>
    </citation>
    <scope>NUCLEOTIDE SEQUENCE [LARGE SCALE GENOMIC DNA]</scope>
    <source>
        <strain>ATCC 53993 / BNL-5-31</strain>
    </source>
</reference>
<proteinExistence type="inferred from homology"/>
<sequence>MAFDQDTVRRTAHLARIALPQAEIPAVADQLERIMGLVEELRAIETTDVPIMAHPLDLDQPLRPDMVVHQDQREVLMASAPAAEHGLFLVPKVIE</sequence>
<name>GATC_ACIF5</name>
<comment type="function">
    <text evidence="1">Allows the formation of correctly charged Asn-tRNA(Asn) or Gln-tRNA(Gln) through the transamidation of misacylated Asp-tRNA(Asn) or Glu-tRNA(Gln) in organisms which lack either or both of asparaginyl-tRNA or glutaminyl-tRNA synthetases. The reaction takes place in the presence of glutamine and ATP through an activated phospho-Asp-tRNA(Asn) or phospho-Glu-tRNA(Gln).</text>
</comment>
<comment type="catalytic activity">
    <reaction evidence="1">
        <text>L-glutamyl-tRNA(Gln) + L-glutamine + ATP + H2O = L-glutaminyl-tRNA(Gln) + L-glutamate + ADP + phosphate + H(+)</text>
        <dbReference type="Rhea" id="RHEA:17521"/>
        <dbReference type="Rhea" id="RHEA-COMP:9681"/>
        <dbReference type="Rhea" id="RHEA-COMP:9684"/>
        <dbReference type="ChEBI" id="CHEBI:15377"/>
        <dbReference type="ChEBI" id="CHEBI:15378"/>
        <dbReference type="ChEBI" id="CHEBI:29985"/>
        <dbReference type="ChEBI" id="CHEBI:30616"/>
        <dbReference type="ChEBI" id="CHEBI:43474"/>
        <dbReference type="ChEBI" id="CHEBI:58359"/>
        <dbReference type="ChEBI" id="CHEBI:78520"/>
        <dbReference type="ChEBI" id="CHEBI:78521"/>
        <dbReference type="ChEBI" id="CHEBI:456216"/>
    </reaction>
</comment>
<comment type="catalytic activity">
    <reaction evidence="1">
        <text>L-aspartyl-tRNA(Asn) + L-glutamine + ATP + H2O = L-asparaginyl-tRNA(Asn) + L-glutamate + ADP + phosphate + 2 H(+)</text>
        <dbReference type="Rhea" id="RHEA:14513"/>
        <dbReference type="Rhea" id="RHEA-COMP:9674"/>
        <dbReference type="Rhea" id="RHEA-COMP:9677"/>
        <dbReference type="ChEBI" id="CHEBI:15377"/>
        <dbReference type="ChEBI" id="CHEBI:15378"/>
        <dbReference type="ChEBI" id="CHEBI:29985"/>
        <dbReference type="ChEBI" id="CHEBI:30616"/>
        <dbReference type="ChEBI" id="CHEBI:43474"/>
        <dbReference type="ChEBI" id="CHEBI:58359"/>
        <dbReference type="ChEBI" id="CHEBI:78515"/>
        <dbReference type="ChEBI" id="CHEBI:78516"/>
        <dbReference type="ChEBI" id="CHEBI:456216"/>
    </reaction>
</comment>
<comment type="subunit">
    <text evidence="1">Heterotrimer of A, B and C subunits.</text>
</comment>
<comment type="similarity">
    <text evidence="1">Belongs to the GatC family.</text>
</comment>
<feature type="chain" id="PRO_1000095257" description="Aspartyl/glutamyl-tRNA(Asn/Gln) amidotransferase subunit C">
    <location>
        <begin position="1"/>
        <end position="95"/>
    </location>
</feature>